<name>VP1_AQRVG</name>
<sequence>MAAVYGIQLVNKLNTATVRRTYLPNRYDILIDRLTNHTQHNVLHRALDFNATTREATVVQLYPPLNAWTPSSATNVTDYTYLEWVDFIQERSTTFSEVLRQRYPITTYANRFVNPLVVGAAFSDFLNADDISVYLEHLFYDPRVESPVQAILSFPYQWTPRFHVFQEFIRTGAGCKYARSSRDMTPPTPARLPRYGKHRPAYATVFYYNTLAARSTILAGISAGPTALEHFDSPTYGPHIILPQAGDVLGYHSRPVSQADLLMTESVMDCLRENSQASASTAVARLDQTYHPVANFDPTNEDSMMSRLTNLALLVVQGAQAELAIPTVPTNDDVRGFVARLMSEGQRQRWFPYRTDRVLIHPDSPFVLPPGDFYAAYRVANFPFTSGTYTSVPNATKPLRVLPQYRAATILPAQATQAYEDHVIAPININHGYCISGGVYFTADDISIDPTPFPARDLAQLPQNYFDPNRMARRELLRRLRVPSDRSYLKDNAVFTFLASLVNPATALPALQPGFSLAYLGASAAHAKSDEPTILADLRNGSIPGLPIPSRIAQFGYDVVHGSLLDLTRAVPTGTFGLVYADLDQVEDAGTDLPAANRAALAMLGTTLQMCTAGGVAVLKVNFPTVEFWTQLFNQYATFATTLHVVKPIVVNSSEVFVVMSGRQSAGNLTCTTSLQRALLAMYARNAAIDQTMTHVPMLGQADDGTSALGMEAIRLFDPLFVEGNPNAATSALATLMANVVPSSIHMSRLPVNGPVSTTIFGKRTFLSTRRRDRLLEYPLPMVTAINHQRRFTAPPSFSIYPTEPVNVTTLVAAGYNAYVHTVITSAQPAHLFDLGTGPECRILSLVPQNTRVTMVDSRPCAELMQAYDPNTTAYEQADYTLAAFWNGRQCDAVSAIFTLGAAAASNAVTIDALLANLLPSIANAGTTRLWLQVNAPLAGPTPIPGLIDIDTRAGTYTFNNGERTEPYIDPQVMQATVLAHFPNATLSWYTLPPTCEWLDYIIGAGSSLDLSTIPTALQYSQLTPILSIDTNVAPLRVNPIPTPLGQQCAIRIPTNDPAAVLDAKHRGVPVITGTPAALTSLMGNAALQYIQANNEFLLQLTPTLAGIFDVTLTSAGQPPIPRGSFTITAPPPTAAVTMPANIDYTDAGNDGPIACDPYYNLAVCIMRNGQYVRVNPEKARVETVAAGRALHFVLDLADNHVLMYLCDVTPAAIGAIIAHPLADIYQLVFPNNTPLRASLPYIGGGARVELNNQPYLSLTNPPPVLPAGTALAALATAASVGQPTYTLPAGAYRYVLE</sequence>
<reference key="1">
    <citation type="journal article" date="2008" name="Virology">
        <title>Complete characterisation of the American grass carp reovirus genome (genus Aquareovirus: family Reoviridae) reveals an evolutionary link between aquareoviruses and coltiviruses.</title>
        <authorList>
            <person name="Mohd Jaafar F."/>
            <person name="Goodwin A.E."/>
            <person name="Belhouchet M."/>
            <person name="Merry G."/>
            <person name="Fang Q."/>
            <person name="Cantaloube J.F."/>
            <person name="Biagini P."/>
            <person name="de Micco P."/>
            <person name="Mertens P.P."/>
            <person name="Attoui H."/>
        </authorList>
    </citation>
    <scope>NUCLEOTIDE SEQUENCE [GENOMIC RNA]</scope>
</reference>
<proteinExistence type="inferred from homology"/>
<comment type="function">
    <text evidence="1">Outer capsid protein involved in mRNA capping. Catalyzes the last 3 enzymatic activities for formation of the 5' cap structure on the viral plus-strand transcripts, namely the RNA guanylyltransferase, RNA-7N- and RNA-2'O-methyltransferase activities (By similarity).</text>
</comment>
<comment type="catalytic activity">
    <reaction>
        <text>a 5'-end diphospho-ribonucleoside in mRNA + GTP + H(+) = a 5'-end (5'-triphosphoguanosine)-ribonucleoside in mRNA + diphosphate</text>
        <dbReference type="Rhea" id="RHEA:67012"/>
        <dbReference type="Rhea" id="RHEA-COMP:17165"/>
        <dbReference type="Rhea" id="RHEA-COMP:17166"/>
        <dbReference type="ChEBI" id="CHEBI:15378"/>
        <dbReference type="ChEBI" id="CHEBI:33019"/>
        <dbReference type="ChEBI" id="CHEBI:37565"/>
        <dbReference type="ChEBI" id="CHEBI:167616"/>
        <dbReference type="ChEBI" id="CHEBI:167617"/>
        <dbReference type="EC" id="2.7.7.50"/>
    </reaction>
</comment>
<comment type="catalytic activity">
    <reaction>
        <text>a 5'-end (5'-triphosphoguanosine)-ribonucleoside in mRNA + S-adenosyl-L-methionine = a 5'-end (N(7)-methyl 5'-triphosphoguanosine)-ribonucleoside in mRNA + S-adenosyl-L-homocysteine</text>
        <dbReference type="Rhea" id="RHEA:67008"/>
        <dbReference type="Rhea" id="RHEA-COMP:17166"/>
        <dbReference type="Rhea" id="RHEA-COMP:17167"/>
        <dbReference type="ChEBI" id="CHEBI:57856"/>
        <dbReference type="ChEBI" id="CHEBI:59789"/>
        <dbReference type="ChEBI" id="CHEBI:156461"/>
        <dbReference type="ChEBI" id="CHEBI:167617"/>
        <dbReference type="EC" id="2.1.1.56"/>
    </reaction>
</comment>
<comment type="subcellular location">
    <subcellularLocation>
        <location evidence="2">Virion</location>
    </subcellularLocation>
</comment>
<comment type="similarity">
    <text evidence="2">Belongs to the aquareoviridae outer capsid VP1 protein family.</text>
</comment>
<dbReference type="EC" id="2.7.7.50"/>
<dbReference type="EC" id="2.1.1.56"/>
<dbReference type="EMBL" id="EF589098">
    <property type="protein sequence ID" value="ABV01039.1"/>
    <property type="molecule type" value="Genomic_RNA"/>
</dbReference>
<dbReference type="RefSeq" id="YP_001837094.1">
    <property type="nucleotide sequence ID" value="NC_010584.1"/>
</dbReference>
<dbReference type="SMR" id="B2BND9"/>
<dbReference type="KEGG" id="vg:6218799"/>
<dbReference type="Proteomes" id="UP000001674">
    <property type="component" value="Genome"/>
</dbReference>
<dbReference type="GO" id="GO:0039624">
    <property type="term" value="C:viral outer capsid"/>
    <property type="evidence" value="ECO:0007669"/>
    <property type="project" value="UniProtKB-KW"/>
</dbReference>
<dbReference type="GO" id="GO:0005524">
    <property type="term" value="F:ATP binding"/>
    <property type="evidence" value="ECO:0007669"/>
    <property type="project" value="UniProtKB-KW"/>
</dbReference>
<dbReference type="GO" id="GO:0005525">
    <property type="term" value="F:GTP binding"/>
    <property type="evidence" value="ECO:0007669"/>
    <property type="project" value="UniProtKB-KW"/>
</dbReference>
<dbReference type="GO" id="GO:0004482">
    <property type="term" value="F:mRNA 5'-cap (guanine-N7-)-methyltransferase activity"/>
    <property type="evidence" value="ECO:0007669"/>
    <property type="project" value="UniProtKB-EC"/>
</dbReference>
<dbReference type="GO" id="GO:0004484">
    <property type="term" value="F:mRNA guanylyltransferase activity"/>
    <property type="evidence" value="ECO:0007669"/>
    <property type="project" value="UniProtKB-EC"/>
</dbReference>
<dbReference type="Gene3D" id="2.60.40.10">
    <property type="entry name" value="Immunoglobulins"/>
    <property type="match status" value="1"/>
</dbReference>
<dbReference type="Gene3D" id="3.55.60.10">
    <property type="entry name" value="Reovirus components"/>
    <property type="match status" value="1"/>
</dbReference>
<dbReference type="Gene3D" id="3.90.1810.10">
    <property type="entry name" value="Reovirus components"/>
    <property type="match status" value="1"/>
</dbReference>
<dbReference type="Gene3D" id="3.40.50.10760">
    <property type="entry name" value="Reovirus core"/>
    <property type="match status" value="1"/>
</dbReference>
<dbReference type="Gene3D" id="3.40.50.150">
    <property type="entry name" value="Vaccinia Virus protein VP39"/>
    <property type="match status" value="1"/>
</dbReference>
<dbReference type="InterPro" id="IPR013783">
    <property type="entry name" value="Ig-like_fold"/>
</dbReference>
<dbReference type="InterPro" id="IPR048604">
    <property type="entry name" value="Reovirus_L2_4th"/>
</dbReference>
<dbReference type="InterPro" id="IPR048603">
    <property type="entry name" value="Reovirus_L2_6th"/>
</dbReference>
<dbReference type="InterPro" id="IPR048602">
    <property type="entry name" value="Reovirus_L2_7th"/>
</dbReference>
<dbReference type="InterPro" id="IPR048294">
    <property type="entry name" value="Reovirus_L2_8th"/>
</dbReference>
<dbReference type="InterPro" id="IPR048601">
    <property type="entry name" value="Reovirus_L2_GTase"/>
</dbReference>
<dbReference type="InterPro" id="IPR048598">
    <property type="entry name" value="Reovirus_L2_MT1"/>
</dbReference>
<dbReference type="InterPro" id="IPR048597">
    <property type="entry name" value="Reovirus_L2_MT2"/>
</dbReference>
<dbReference type="InterPro" id="IPR048596">
    <property type="entry name" value="Reovirus_L2_N"/>
</dbReference>
<dbReference type="InterPro" id="IPR029063">
    <property type="entry name" value="SAM-dependent_MTases_sf"/>
</dbReference>
<dbReference type="Pfam" id="PF21062">
    <property type="entry name" value="Reovirus_L2_4th"/>
    <property type="match status" value="1"/>
</dbReference>
<dbReference type="Pfam" id="PF21060">
    <property type="entry name" value="Reovirus_L2_6th"/>
    <property type="match status" value="1"/>
</dbReference>
<dbReference type="Pfam" id="PF21061">
    <property type="entry name" value="Reovirus_L2_7th"/>
    <property type="match status" value="1"/>
</dbReference>
<dbReference type="Pfam" id="PF06016">
    <property type="entry name" value="Reovirus_L2_8th"/>
    <property type="match status" value="1"/>
</dbReference>
<dbReference type="Pfam" id="PF21063">
    <property type="entry name" value="Reovirus_L2_GTase"/>
    <property type="match status" value="1"/>
</dbReference>
<dbReference type="Pfam" id="PF21065">
    <property type="entry name" value="Reovirus_L2_MT1"/>
    <property type="match status" value="1"/>
</dbReference>
<dbReference type="Pfam" id="PF21066">
    <property type="entry name" value="Reovirus_L2_MT2"/>
    <property type="match status" value="1"/>
</dbReference>
<dbReference type="Pfam" id="PF21064">
    <property type="entry name" value="Reovirus_L2_N"/>
    <property type="match status" value="1"/>
</dbReference>
<feature type="chain" id="PRO_0000404186" description="Outer capsid protein VP1">
    <location>
        <begin position="1"/>
        <end position="1298"/>
    </location>
</feature>
<gene>
    <name type="primary">S1</name>
</gene>
<evidence type="ECO:0000250" key="1"/>
<evidence type="ECO:0000305" key="2"/>
<organismHost>
    <name type="scientific">Ctenopharyngodon idella</name>
    <name type="common">Grass carp</name>
    <name type="synonym">Leuciscus idella</name>
    <dbReference type="NCBI Taxonomy" id="7959"/>
</organismHost>
<accession>B2BND9</accession>
<organism>
    <name type="scientific">Aquareovirus G (isolate American grass carp/USA/PB01-155/-)</name>
    <name type="common">AQRV-G</name>
    <dbReference type="NCBI Taxonomy" id="648234"/>
    <lineage>
        <taxon>Viruses</taxon>
        <taxon>Riboviria</taxon>
        <taxon>Orthornavirae</taxon>
        <taxon>Duplornaviricota</taxon>
        <taxon>Resentoviricetes</taxon>
        <taxon>Reovirales</taxon>
        <taxon>Spinareoviridae</taxon>
        <taxon>Aquareovirus</taxon>
        <taxon>Aquareovirus graminis</taxon>
    </lineage>
</organism>
<keyword id="KW-0067">ATP-binding</keyword>
<keyword id="KW-0167">Capsid protein</keyword>
<keyword id="KW-0342">GTP-binding</keyword>
<keyword id="KW-0489">Methyltransferase</keyword>
<keyword id="KW-0506">mRNA capping</keyword>
<keyword id="KW-0507">mRNA processing</keyword>
<keyword id="KW-0511">Multifunctional enzyme</keyword>
<keyword id="KW-0547">Nucleotide-binding</keyword>
<keyword id="KW-1152">Outer capsid protein</keyword>
<keyword id="KW-1185">Reference proteome</keyword>
<keyword id="KW-0949">S-adenosyl-L-methionine</keyword>
<keyword id="KW-0808">Transferase</keyword>
<keyword id="KW-0946">Virion</keyword>
<protein>
    <recommendedName>
        <fullName>Outer capsid protein VP1</fullName>
    </recommendedName>
    <domain>
        <recommendedName>
            <fullName>mRNA guanylyltransferase</fullName>
            <ecNumber>2.7.7.50</ecNumber>
        </recommendedName>
    </domain>
    <domain>
        <recommendedName>
            <fullName>mRNA (guanine-N(7))-methyltransferase</fullName>
            <ecNumber>2.1.1.56</ecNumber>
        </recommendedName>
    </domain>
</protein>